<comment type="function">
    <text evidence="1">Transcription factor that binds to the GCC-box pathogenesis-related promoter element. Involved in the regulation of gene expression by stress factors and by components of stress signal transduction pathways. Probably acts as a transcriptional activator (By similarity).</text>
</comment>
<comment type="subcellular location">
    <subcellularLocation>
        <location evidence="5">Nucleus</location>
    </subcellularLocation>
</comment>
<comment type="tissue specificity">
    <text evidence="4">Weakly expressed in roots.</text>
</comment>
<comment type="induction">
    <text evidence="4">Induced by ethylene.</text>
</comment>
<comment type="domain">
    <text evidence="1">The AP2/ERF domain binds specifically to the 5'-GCCGCC-3' motif. The affinity of this binding is higher if the seventh amino-acid of this domain is basic (By similarity).</text>
</comment>
<comment type="similarity">
    <text evidence="5">Belongs to the ethylene-response factor family. Class 1 subfamily.</text>
</comment>
<accession>Q9LW50</accession>
<evidence type="ECO:0000250" key="1"/>
<evidence type="ECO:0000255" key="2">
    <source>
        <dbReference type="PROSITE-ProRule" id="PRU00366"/>
    </source>
</evidence>
<evidence type="ECO:0000256" key="3">
    <source>
        <dbReference type="SAM" id="MobiDB-lite"/>
    </source>
</evidence>
<evidence type="ECO:0000269" key="4">
    <source>
    </source>
</evidence>
<evidence type="ECO:0000305" key="5"/>
<sequence>MYQPISTEFPVYHRTSSFSSLMPCLTDTWGDLPLKVDDSEDMVIYGLLSDALTTGWTPFNLTSTEIKAEPREEIEPATSPVPSVAPPAETTTAQAVVPKGRHYRGVRQRPWGKFAAEIRDPAKNGARVWLGTYETAEEAALAYDKAAYRMRGSKALLNFPHRIGLNEPEPVRLTVKRRSPEPASSSISPASENSLPKRRRKAVAAKQAELEVQSRSNVMQVGCQMEQFPVGEQLLVS</sequence>
<dbReference type="EMBL" id="AB016264">
    <property type="protein sequence ID" value="BAA97122.1"/>
    <property type="molecule type" value="Genomic_DNA"/>
</dbReference>
<dbReference type="STRING" id="4096.Q9LW50"/>
<dbReference type="GeneID" id="104217398"/>
<dbReference type="KEGG" id="nsy:104217398"/>
<dbReference type="eggNOG" id="ENOG502QRIC">
    <property type="taxonomic scope" value="Eukaryota"/>
</dbReference>
<dbReference type="Proteomes" id="UP000189701">
    <property type="component" value="Unplaced"/>
</dbReference>
<dbReference type="GO" id="GO:0005634">
    <property type="term" value="C:nucleus"/>
    <property type="evidence" value="ECO:0007669"/>
    <property type="project" value="UniProtKB-SubCell"/>
</dbReference>
<dbReference type="GO" id="GO:0003677">
    <property type="term" value="F:DNA binding"/>
    <property type="evidence" value="ECO:0007669"/>
    <property type="project" value="UniProtKB-KW"/>
</dbReference>
<dbReference type="GO" id="GO:0003700">
    <property type="term" value="F:DNA-binding transcription factor activity"/>
    <property type="evidence" value="ECO:0007669"/>
    <property type="project" value="InterPro"/>
</dbReference>
<dbReference type="GO" id="GO:0006952">
    <property type="term" value="P:defense response"/>
    <property type="evidence" value="ECO:0007669"/>
    <property type="project" value="UniProtKB-KW"/>
</dbReference>
<dbReference type="GO" id="GO:0009873">
    <property type="term" value="P:ethylene-activated signaling pathway"/>
    <property type="evidence" value="ECO:0007669"/>
    <property type="project" value="UniProtKB-KW"/>
</dbReference>
<dbReference type="CDD" id="cd00018">
    <property type="entry name" value="AP2"/>
    <property type="match status" value="1"/>
</dbReference>
<dbReference type="FunFam" id="3.30.730.10:FF:000001">
    <property type="entry name" value="Ethylene-responsive transcription factor 2"/>
    <property type="match status" value="1"/>
</dbReference>
<dbReference type="Gene3D" id="3.30.730.10">
    <property type="entry name" value="AP2/ERF domain"/>
    <property type="match status" value="1"/>
</dbReference>
<dbReference type="InterPro" id="IPR001471">
    <property type="entry name" value="AP2/ERF_dom"/>
</dbReference>
<dbReference type="InterPro" id="IPR036955">
    <property type="entry name" value="AP2/ERF_dom_sf"/>
</dbReference>
<dbReference type="InterPro" id="IPR016177">
    <property type="entry name" value="DNA-bd_dom_sf"/>
</dbReference>
<dbReference type="InterPro" id="IPR044808">
    <property type="entry name" value="ERF_plant"/>
</dbReference>
<dbReference type="PANTHER" id="PTHR31190">
    <property type="entry name" value="DNA-BINDING DOMAIN"/>
    <property type="match status" value="1"/>
</dbReference>
<dbReference type="PANTHER" id="PTHR31190:SF476">
    <property type="entry name" value="ETHYLENE-RESPONSIVE TRANSCRIPTION FACTOR 1"/>
    <property type="match status" value="1"/>
</dbReference>
<dbReference type="Pfam" id="PF00847">
    <property type="entry name" value="AP2"/>
    <property type="match status" value="1"/>
</dbReference>
<dbReference type="PRINTS" id="PR00367">
    <property type="entry name" value="ETHRSPELEMNT"/>
</dbReference>
<dbReference type="SMART" id="SM00380">
    <property type="entry name" value="AP2"/>
    <property type="match status" value="1"/>
</dbReference>
<dbReference type="SUPFAM" id="SSF54171">
    <property type="entry name" value="DNA-binding domain"/>
    <property type="match status" value="1"/>
</dbReference>
<dbReference type="PROSITE" id="PS51032">
    <property type="entry name" value="AP2_ERF"/>
    <property type="match status" value="1"/>
</dbReference>
<gene>
    <name type="primary">ERF2</name>
    <name type="synonym">ERF-2</name>
</gene>
<name>ERF2_NICSY</name>
<feature type="chain" id="PRO_0000112547" description="Ethylene-responsive transcription factor 2">
    <location>
        <begin position="1"/>
        <end position="237"/>
    </location>
</feature>
<feature type="DNA-binding region" description="AP2/ERF" evidence="2">
    <location>
        <begin position="102"/>
        <end position="160"/>
    </location>
</feature>
<feature type="region of interest" description="Disordered" evidence="3">
    <location>
        <begin position="175"/>
        <end position="202"/>
    </location>
</feature>
<feature type="compositionally biased region" description="Low complexity" evidence="3">
    <location>
        <begin position="181"/>
        <end position="194"/>
    </location>
</feature>
<keyword id="KW-0010">Activator</keyword>
<keyword id="KW-0238">DNA-binding</keyword>
<keyword id="KW-0936">Ethylene signaling pathway</keyword>
<keyword id="KW-0539">Nucleus</keyword>
<keyword id="KW-0611">Plant defense</keyword>
<keyword id="KW-1185">Reference proteome</keyword>
<keyword id="KW-0804">Transcription</keyword>
<keyword id="KW-0805">Transcription regulation</keyword>
<reference key="1">
    <citation type="journal article" date="2000" name="Plant Cell Physiol.">
        <title>Characterization of gene expression of NsERFs, transcription factors of basic PR genes from Nicotiana sylvestris.</title>
        <authorList>
            <person name="Kitajima S."/>
            <person name="Koyama T."/>
            <person name="Ohme-Takagi M."/>
            <person name="Shinshi H."/>
            <person name="Sato F."/>
        </authorList>
    </citation>
    <scope>NUCLEOTIDE SEQUENCE [GENOMIC DNA]</scope>
    <scope>INDUCTION</scope>
    <scope>TISSUE SPECIFICITY</scope>
</reference>
<organism>
    <name type="scientific">Nicotiana sylvestris</name>
    <name type="common">Wood tobacco</name>
    <name type="synonym">South American tobacco</name>
    <dbReference type="NCBI Taxonomy" id="4096"/>
    <lineage>
        <taxon>Eukaryota</taxon>
        <taxon>Viridiplantae</taxon>
        <taxon>Streptophyta</taxon>
        <taxon>Embryophyta</taxon>
        <taxon>Tracheophyta</taxon>
        <taxon>Spermatophyta</taxon>
        <taxon>Magnoliopsida</taxon>
        <taxon>eudicotyledons</taxon>
        <taxon>Gunneridae</taxon>
        <taxon>Pentapetalae</taxon>
        <taxon>asterids</taxon>
        <taxon>lamiids</taxon>
        <taxon>Solanales</taxon>
        <taxon>Solanaceae</taxon>
        <taxon>Nicotianoideae</taxon>
        <taxon>Nicotianeae</taxon>
        <taxon>Nicotiana</taxon>
    </lineage>
</organism>
<proteinExistence type="evidence at transcript level"/>
<protein>
    <recommendedName>
        <fullName>Ethylene-responsive transcription factor 2</fullName>
        <shortName>NsERF2</shortName>
    </recommendedName>
    <alternativeName>
        <fullName>Ethylene-responsive element-binding factor 2</fullName>
        <shortName>EREBP-2</shortName>
    </alternativeName>
</protein>